<proteinExistence type="evidence at transcript level"/>
<protein>
    <recommendedName>
        <fullName>M-phase phosphoprotein 9</fullName>
    </recommendedName>
</protein>
<comment type="function">
    <text evidence="1 4">Negatively regulates cilia formation by recruiting the CP110-CEP97 complex (a negative regulator of ciliogenesis) at the distal end of the mother centriole in ciliary cells (PubMed:30375385). At the beginning of cilia formation, MPHOSPH9 undergoes TTBK2-mediated phosphorylation and degradation via the ubiquitin-proteasome system and removes itself and the CP110-CEP97 complex from the distal end of the mother centriole, which subsequently promotes cilia formation (By similarity).</text>
</comment>
<comment type="subunit">
    <text evidence="1">Interacts with CCP110, CEP97 and KIF24.</text>
</comment>
<comment type="subcellular location">
    <subcellularLocation>
        <location evidence="1">Cytoplasm</location>
        <location evidence="1">Cytoskeleton</location>
        <location evidence="1">Microtubule organizing center</location>
        <location evidence="1">Centrosome</location>
        <location evidence="1">Centriole</location>
    </subcellularLocation>
    <subcellularLocation>
        <location evidence="1">Golgi apparatus membrane</location>
        <topology evidence="1">Peripheral membrane protein</topology>
    </subcellularLocation>
    <subcellularLocation>
        <location evidence="4">Cytoplasm</location>
        <location evidence="4">Cytoskeleton</location>
        <location evidence="4">Microtubule organizing center</location>
        <location evidence="4">Centrosome</location>
    </subcellularLocation>
    <text evidence="1">Localizes to the distal and proximal end of centriole pairs in duplicated centrosomes. In ciliated cells, localizes to the distal and proximal end of daughter centriole and proximal of the mother centriole but not in the distal end of the mother centriole (By similarity). Recruited by KIF24 to the distal end of mother centriole where it forms a ring-like structure (By similarity).</text>
</comment>
<comment type="PTM">
    <text evidence="1">TTBK2-mediated phosphorylation at Ser-710 and Ser-717, promotes its ubiquitination at Lys-713 leading to proteasomal degradation, loss of MPHOSPH9 facilitates the removal of the CP110-CEP97 complex from the mother centrioles, promoting the initiation of ciliogenesis (By similarity). Phosphorylated in M (mitotic) phase (By similarity).</text>
</comment>
<comment type="PTM">
    <text evidence="1">Ubiquitinated at Lys-713, leading to proteasomal degradation.</text>
</comment>
<comment type="disruption phenotype">
    <text evidence="4">Knockout mice show decreased body weight when compared with wild-type mice around 1 month after birth (PubMed:30375385). An increased percentage of ciliated cells in the proximal and distal tubules is observed in the kidneys of knockout mice at 1 and 4 months after birth (PubMed:30375385).</text>
</comment>
<comment type="sequence caution" evidence="5">
    <conflict type="erroneous initiation">
        <sequence resource="EMBL-CDS" id="AAI38424"/>
    </conflict>
    <text>Truncated N-terminus.</text>
</comment>
<comment type="sequence caution" evidence="5">
    <conflict type="erroneous initiation">
        <sequence resource="EMBL-CDS" id="AAI45682"/>
    </conflict>
    <text>Truncated N-terminus.</text>
</comment>
<comment type="sequence caution" evidence="5">
    <conflict type="erroneous initiation">
        <sequence resource="EMBL-CDS" id="BAC39220"/>
    </conflict>
    <text>Truncated N-terminus.</text>
</comment>
<dbReference type="EMBL" id="AC164421">
    <property type="status" value="NOT_ANNOTATED_CDS"/>
    <property type="molecule type" value="Genomic_DNA"/>
</dbReference>
<dbReference type="EMBL" id="AC127339">
    <property type="status" value="NOT_ANNOTATED_CDS"/>
    <property type="molecule type" value="Genomic_DNA"/>
</dbReference>
<dbReference type="EMBL" id="BC138423">
    <property type="protein sequence ID" value="AAI38424.1"/>
    <property type="status" value="ALT_INIT"/>
    <property type="molecule type" value="mRNA"/>
</dbReference>
<dbReference type="EMBL" id="BC145681">
    <property type="protein sequence ID" value="AAI45682.1"/>
    <property type="status" value="ALT_INIT"/>
    <property type="molecule type" value="mRNA"/>
</dbReference>
<dbReference type="EMBL" id="AK081178">
    <property type="protein sequence ID" value="BAC38158.1"/>
    <property type="molecule type" value="mRNA"/>
</dbReference>
<dbReference type="EMBL" id="AK084586">
    <property type="protein sequence ID" value="BAC39220.1"/>
    <property type="status" value="ALT_INIT"/>
    <property type="molecule type" value="mRNA"/>
</dbReference>
<dbReference type="CCDS" id="CCDS39277.1"/>
<dbReference type="RefSeq" id="NP_001074792.1">
    <property type="nucleotide sequence ID" value="NM_001081323.3"/>
</dbReference>
<dbReference type="SMR" id="A6H5Y1"/>
<dbReference type="BioGRID" id="234701">
    <property type="interactions" value="6"/>
</dbReference>
<dbReference type="FunCoup" id="A6H5Y1">
    <property type="interactions" value="928"/>
</dbReference>
<dbReference type="STRING" id="10090.ENSMUSP00000138982"/>
<dbReference type="iPTMnet" id="A6H5Y1"/>
<dbReference type="PhosphoSitePlus" id="A6H5Y1"/>
<dbReference type="jPOST" id="A6H5Y1"/>
<dbReference type="PaxDb" id="10090-ENSMUSP00000031344"/>
<dbReference type="ProteomicsDB" id="290305"/>
<dbReference type="ProteomicsDB" id="347094"/>
<dbReference type="ProteomicsDB" id="367800"/>
<dbReference type="Antibodypedia" id="31757">
    <property type="antibodies" value="169 antibodies from 25 providers"/>
</dbReference>
<dbReference type="DNASU" id="269702"/>
<dbReference type="Ensembl" id="ENSMUST00000031344.13">
    <property type="protein sequence ID" value="ENSMUSP00000031344.7"/>
    <property type="gene ID" value="ENSMUSG00000038126.18"/>
</dbReference>
<dbReference type="GeneID" id="269702"/>
<dbReference type="KEGG" id="mmu:269702"/>
<dbReference type="UCSC" id="uc008zpg.2">
    <property type="organism name" value="mouse"/>
</dbReference>
<dbReference type="UCSC" id="uc008zph.2">
    <property type="organism name" value="mouse"/>
</dbReference>
<dbReference type="UCSC" id="uc008zpi.2">
    <property type="organism name" value="mouse"/>
</dbReference>
<dbReference type="AGR" id="MGI:2443138"/>
<dbReference type="CTD" id="10198"/>
<dbReference type="MGI" id="MGI:2443138">
    <property type="gene designation" value="Mphosph9"/>
</dbReference>
<dbReference type="VEuPathDB" id="HostDB:ENSMUSG00000038126"/>
<dbReference type="eggNOG" id="KOG4713">
    <property type="taxonomic scope" value="Eukaryota"/>
</dbReference>
<dbReference type="GeneTree" id="ENSGT00500000044984"/>
<dbReference type="HOGENOM" id="CLU_008784_0_0_1"/>
<dbReference type="InParanoid" id="A6H5Y1"/>
<dbReference type="OMA" id="DEGPNSW"/>
<dbReference type="OrthoDB" id="6288856at2759"/>
<dbReference type="PhylomeDB" id="A6H5Y1"/>
<dbReference type="TreeFam" id="TF336168"/>
<dbReference type="BioGRID-ORCS" id="269702">
    <property type="hits" value="0 hits in 79 CRISPR screens"/>
</dbReference>
<dbReference type="ChiTaRS" id="Mphosph9">
    <property type="organism name" value="mouse"/>
</dbReference>
<dbReference type="PRO" id="PR:A6H5Y1"/>
<dbReference type="Proteomes" id="UP000000589">
    <property type="component" value="Chromosome 5"/>
</dbReference>
<dbReference type="RNAct" id="A6H5Y1">
    <property type="molecule type" value="protein"/>
</dbReference>
<dbReference type="Bgee" id="ENSMUSG00000038126">
    <property type="expression patterns" value="Expressed in saccule of membranous labyrinth and 244 other cell types or tissues"/>
</dbReference>
<dbReference type="GO" id="GO:0005814">
    <property type="term" value="C:centriole"/>
    <property type="evidence" value="ECO:0000250"/>
    <property type="project" value="UniProtKB"/>
</dbReference>
<dbReference type="GO" id="GO:0005813">
    <property type="term" value="C:centrosome"/>
    <property type="evidence" value="ECO:0000314"/>
    <property type="project" value="UniProtKB"/>
</dbReference>
<dbReference type="GO" id="GO:0000139">
    <property type="term" value="C:Golgi membrane"/>
    <property type="evidence" value="ECO:0007669"/>
    <property type="project" value="UniProtKB-SubCell"/>
</dbReference>
<dbReference type="GO" id="GO:1902018">
    <property type="term" value="P:negative regulation of cilium assembly"/>
    <property type="evidence" value="ECO:0000315"/>
    <property type="project" value="UniProtKB"/>
</dbReference>
<dbReference type="InterPro" id="IPR026636">
    <property type="entry name" value="MPHOSPH9"/>
</dbReference>
<dbReference type="PANTHER" id="PTHR14926">
    <property type="entry name" value="M-PHASE PHOSPHOPROTEIN 9"/>
    <property type="match status" value="1"/>
</dbReference>
<dbReference type="PANTHER" id="PTHR14926:SF1">
    <property type="entry name" value="M-PHASE PHOSPHOPROTEIN 9"/>
    <property type="match status" value="1"/>
</dbReference>
<dbReference type="SUPFAM" id="SSF57997">
    <property type="entry name" value="Tropomyosin"/>
    <property type="match status" value="1"/>
</dbReference>
<gene>
    <name type="primary">Mphosph9</name>
</gene>
<evidence type="ECO:0000250" key="1">
    <source>
        <dbReference type="UniProtKB" id="Q99550"/>
    </source>
</evidence>
<evidence type="ECO:0000255" key="2"/>
<evidence type="ECO:0000256" key="3">
    <source>
        <dbReference type="SAM" id="MobiDB-lite"/>
    </source>
</evidence>
<evidence type="ECO:0000269" key="4">
    <source>
    </source>
</evidence>
<evidence type="ECO:0000305" key="5"/>
<keyword id="KW-0175">Coiled coil</keyword>
<keyword id="KW-0963">Cytoplasm</keyword>
<keyword id="KW-0206">Cytoskeleton</keyword>
<keyword id="KW-0333">Golgi apparatus</keyword>
<keyword id="KW-1017">Isopeptide bond</keyword>
<keyword id="KW-0472">Membrane</keyword>
<keyword id="KW-0597">Phosphoprotein</keyword>
<keyword id="KW-1185">Reference proteome</keyword>
<keyword id="KW-0832">Ubl conjugation</keyword>
<organism>
    <name type="scientific">Mus musculus</name>
    <name type="common">Mouse</name>
    <dbReference type="NCBI Taxonomy" id="10090"/>
    <lineage>
        <taxon>Eukaryota</taxon>
        <taxon>Metazoa</taxon>
        <taxon>Chordata</taxon>
        <taxon>Craniata</taxon>
        <taxon>Vertebrata</taxon>
        <taxon>Euteleostomi</taxon>
        <taxon>Mammalia</taxon>
        <taxon>Eutheria</taxon>
        <taxon>Euarchontoglires</taxon>
        <taxon>Glires</taxon>
        <taxon>Rodentia</taxon>
        <taxon>Myomorpha</taxon>
        <taxon>Muroidea</taxon>
        <taxon>Muridae</taxon>
        <taxon>Murinae</taxon>
        <taxon>Mus</taxon>
        <taxon>Mus</taxon>
    </lineage>
</organism>
<name>MPP9_MOUSE</name>
<reference key="1">
    <citation type="journal article" date="2009" name="PLoS Biol.">
        <title>Lineage-specific biology revealed by a finished genome assembly of the mouse.</title>
        <authorList>
            <person name="Church D.M."/>
            <person name="Goodstadt L."/>
            <person name="Hillier L.W."/>
            <person name="Zody M.C."/>
            <person name="Goldstein S."/>
            <person name="She X."/>
            <person name="Bult C.J."/>
            <person name="Agarwala R."/>
            <person name="Cherry J.L."/>
            <person name="DiCuccio M."/>
            <person name="Hlavina W."/>
            <person name="Kapustin Y."/>
            <person name="Meric P."/>
            <person name="Maglott D."/>
            <person name="Birtle Z."/>
            <person name="Marques A.C."/>
            <person name="Graves T."/>
            <person name="Zhou S."/>
            <person name="Teague B."/>
            <person name="Potamousis K."/>
            <person name="Churas C."/>
            <person name="Place M."/>
            <person name="Herschleb J."/>
            <person name="Runnheim R."/>
            <person name="Forrest D."/>
            <person name="Amos-Landgraf J."/>
            <person name="Schwartz D.C."/>
            <person name="Cheng Z."/>
            <person name="Lindblad-Toh K."/>
            <person name="Eichler E.E."/>
            <person name="Ponting C.P."/>
        </authorList>
    </citation>
    <scope>NUCLEOTIDE SEQUENCE [LARGE SCALE GENOMIC DNA]</scope>
    <source>
        <strain>C57BL/6J</strain>
    </source>
</reference>
<reference key="2">
    <citation type="journal article" date="2004" name="Genome Res.">
        <title>The status, quality, and expansion of the NIH full-length cDNA project: the Mammalian Gene Collection (MGC).</title>
        <authorList>
            <consortium name="The MGC Project Team"/>
        </authorList>
    </citation>
    <scope>NUCLEOTIDE SEQUENCE [LARGE SCALE MRNA] OF 88-1114</scope>
    <source>
        <tissue>Brain</tissue>
    </source>
</reference>
<reference key="3">
    <citation type="journal article" date="2005" name="Science">
        <title>The transcriptional landscape of the mammalian genome.</title>
        <authorList>
            <person name="Carninci P."/>
            <person name="Kasukawa T."/>
            <person name="Katayama S."/>
            <person name="Gough J."/>
            <person name="Frith M.C."/>
            <person name="Maeda N."/>
            <person name="Oyama R."/>
            <person name="Ravasi T."/>
            <person name="Lenhard B."/>
            <person name="Wells C."/>
            <person name="Kodzius R."/>
            <person name="Shimokawa K."/>
            <person name="Bajic V.B."/>
            <person name="Brenner S.E."/>
            <person name="Batalov S."/>
            <person name="Forrest A.R."/>
            <person name="Zavolan M."/>
            <person name="Davis M.J."/>
            <person name="Wilming L.G."/>
            <person name="Aidinis V."/>
            <person name="Allen J.E."/>
            <person name="Ambesi-Impiombato A."/>
            <person name="Apweiler R."/>
            <person name="Aturaliya R.N."/>
            <person name="Bailey T.L."/>
            <person name="Bansal M."/>
            <person name="Baxter L."/>
            <person name="Beisel K.W."/>
            <person name="Bersano T."/>
            <person name="Bono H."/>
            <person name="Chalk A.M."/>
            <person name="Chiu K.P."/>
            <person name="Choudhary V."/>
            <person name="Christoffels A."/>
            <person name="Clutterbuck D.R."/>
            <person name="Crowe M.L."/>
            <person name="Dalla E."/>
            <person name="Dalrymple B.P."/>
            <person name="de Bono B."/>
            <person name="Della Gatta G."/>
            <person name="di Bernardo D."/>
            <person name="Down T."/>
            <person name="Engstrom P."/>
            <person name="Fagiolini M."/>
            <person name="Faulkner G."/>
            <person name="Fletcher C.F."/>
            <person name="Fukushima T."/>
            <person name="Furuno M."/>
            <person name="Futaki S."/>
            <person name="Gariboldi M."/>
            <person name="Georgii-Hemming P."/>
            <person name="Gingeras T.R."/>
            <person name="Gojobori T."/>
            <person name="Green R.E."/>
            <person name="Gustincich S."/>
            <person name="Harbers M."/>
            <person name="Hayashi Y."/>
            <person name="Hensch T.K."/>
            <person name="Hirokawa N."/>
            <person name="Hill D."/>
            <person name="Huminiecki L."/>
            <person name="Iacono M."/>
            <person name="Ikeo K."/>
            <person name="Iwama A."/>
            <person name="Ishikawa T."/>
            <person name="Jakt M."/>
            <person name="Kanapin A."/>
            <person name="Katoh M."/>
            <person name="Kawasawa Y."/>
            <person name="Kelso J."/>
            <person name="Kitamura H."/>
            <person name="Kitano H."/>
            <person name="Kollias G."/>
            <person name="Krishnan S.P."/>
            <person name="Kruger A."/>
            <person name="Kummerfeld S.K."/>
            <person name="Kurochkin I.V."/>
            <person name="Lareau L.F."/>
            <person name="Lazarevic D."/>
            <person name="Lipovich L."/>
            <person name="Liu J."/>
            <person name="Liuni S."/>
            <person name="McWilliam S."/>
            <person name="Madan Babu M."/>
            <person name="Madera M."/>
            <person name="Marchionni L."/>
            <person name="Matsuda H."/>
            <person name="Matsuzawa S."/>
            <person name="Miki H."/>
            <person name="Mignone F."/>
            <person name="Miyake S."/>
            <person name="Morris K."/>
            <person name="Mottagui-Tabar S."/>
            <person name="Mulder N."/>
            <person name="Nakano N."/>
            <person name="Nakauchi H."/>
            <person name="Ng P."/>
            <person name="Nilsson R."/>
            <person name="Nishiguchi S."/>
            <person name="Nishikawa S."/>
            <person name="Nori F."/>
            <person name="Ohara O."/>
            <person name="Okazaki Y."/>
            <person name="Orlando V."/>
            <person name="Pang K.C."/>
            <person name="Pavan W.J."/>
            <person name="Pavesi G."/>
            <person name="Pesole G."/>
            <person name="Petrovsky N."/>
            <person name="Piazza S."/>
            <person name="Reed J."/>
            <person name="Reid J.F."/>
            <person name="Ring B.Z."/>
            <person name="Ringwald M."/>
            <person name="Rost B."/>
            <person name="Ruan Y."/>
            <person name="Salzberg S.L."/>
            <person name="Sandelin A."/>
            <person name="Schneider C."/>
            <person name="Schoenbach C."/>
            <person name="Sekiguchi K."/>
            <person name="Semple C.A."/>
            <person name="Seno S."/>
            <person name="Sessa L."/>
            <person name="Sheng Y."/>
            <person name="Shibata Y."/>
            <person name="Shimada H."/>
            <person name="Shimada K."/>
            <person name="Silva D."/>
            <person name="Sinclair B."/>
            <person name="Sperling S."/>
            <person name="Stupka E."/>
            <person name="Sugiura K."/>
            <person name="Sultana R."/>
            <person name="Takenaka Y."/>
            <person name="Taki K."/>
            <person name="Tammoja K."/>
            <person name="Tan S.L."/>
            <person name="Tang S."/>
            <person name="Taylor M.S."/>
            <person name="Tegner J."/>
            <person name="Teichmann S.A."/>
            <person name="Ueda H.R."/>
            <person name="van Nimwegen E."/>
            <person name="Verardo R."/>
            <person name="Wei C.L."/>
            <person name="Yagi K."/>
            <person name="Yamanishi H."/>
            <person name="Zabarovsky E."/>
            <person name="Zhu S."/>
            <person name="Zimmer A."/>
            <person name="Hide W."/>
            <person name="Bult C."/>
            <person name="Grimmond S.M."/>
            <person name="Teasdale R.D."/>
            <person name="Liu E.T."/>
            <person name="Brusic V."/>
            <person name="Quackenbush J."/>
            <person name="Wahlestedt C."/>
            <person name="Mattick J.S."/>
            <person name="Hume D.A."/>
            <person name="Kai C."/>
            <person name="Sasaki D."/>
            <person name="Tomaru Y."/>
            <person name="Fukuda S."/>
            <person name="Kanamori-Katayama M."/>
            <person name="Suzuki M."/>
            <person name="Aoki J."/>
            <person name="Arakawa T."/>
            <person name="Iida J."/>
            <person name="Imamura K."/>
            <person name="Itoh M."/>
            <person name="Kato T."/>
            <person name="Kawaji H."/>
            <person name="Kawagashira N."/>
            <person name="Kawashima T."/>
            <person name="Kojima M."/>
            <person name="Kondo S."/>
            <person name="Konno H."/>
            <person name="Nakano K."/>
            <person name="Ninomiya N."/>
            <person name="Nishio T."/>
            <person name="Okada M."/>
            <person name="Plessy C."/>
            <person name="Shibata K."/>
            <person name="Shiraki T."/>
            <person name="Suzuki S."/>
            <person name="Tagami M."/>
            <person name="Waki K."/>
            <person name="Watahiki A."/>
            <person name="Okamura-Oho Y."/>
            <person name="Suzuki H."/>
            <person name="Kawai J."/>
            <person name="Hayashizaki Y."/>
        </authorList>
    </citation>
    <scope>NUCLEOTIDE SEQUENCE [LARGE SCALE MRNA] OF 88-631</scope>
    <source>
        <strain>C57BL/6J</strain>
        <tissue>Cerebellum</tissue>
        <tissue>Heart</tissue>
    </source>
</reference>
<reference key="4">
    <citation type="journal article" date="2018" name="Nat. Commun.">
        <title>M-Phase Phosphoprotein 9 regulates ciliogenesis by modulating CP110-CEP97 complex localization at the mother centriole.</title>
        <authorList>
            <person name="Huang N."/>
            <person name="Zhang D."/>
            <person name="Li F."/>
            <person name="Chai P."/>
            <person name="Wang S."/>
            <person name="Teng J."/>
            <person name="Chen J."/>
        </authorList>
    </citation>
    <scope>FUNCTION</scope>
    <scope>SUBCELLULAR LOCATION</scope>
    <scope>DISRUPTION PHENOTYPE</scope>
</reference>
<accession>A6H5Y1</accession>
<accession>A0A8Q0P9S6</accession>
<accession>E9QPF8</accession>
<accession>Q8BUK7</accession>
<accession>Q8BV15</accession>
<accession>V9GX48</accession>
<sequence length="1114" mass="123259">MEDFDLVENLQKTSPSVESDIKSAPQSLGLSLHANRSSPHLSTNGVSSFSGKTGPPVIQGTVEVLTALRQDLQNSGRTDSELWKSCERIQEEIRKLVKLQLSHASRPSCSSSSVSEQVSAETQMGFFSENSERNESVVSSPASKEPETQPASSTSYPDCHVDSSSVSSGYGTFCILDMNTHKAKEPTEPLEPGAASQGQHPASVVQAHGPAGGAAAINFFTQTPEELCASLKEDGSTFPGEFDRNFLGENKISEVYSGKANSGKSVTSWAQRLKQNQSKQAHTEDDCSGPKPGSELNWKPPADTFDLAADAARPCAFYINKPAESPSSWLSDSGTGLTYWKLEEKDMYHSLPETLEKTFAPSPAERPLSQVLTLDPGAIRMKPKEHVAGIQAHGFLHALDDRISFSPDSVLEPSLSRHSDTDSSSQASHNPSQVSGFSKYPSTTRASPVDTWKNHAFQRESRTSSTIPSRYTITSNDISVKTVDEENTVTVASVSQSQLPGTANSVPECISLASLEDPVMLSKIRQNLKEKHARHVADLRAYYESEISSLKQKLEAKDISAVEEWKKKNEILADRCGQLDSALNEATSRVRTLEKNNNLLEIEVSDLRERFNAASSASKVLQERIEEMRTSNKEKDNTITRLKCRLQDLEEAFENAYKLSDDKEARLRQENKMFQDLLGEYESLGKEHGRVKDTLNTTENKLLDAHTQISDLKRTISKLEAQVKQAEHESMLSLRNGAKVPERPSRSNSVATSDVSRRKWLIPGAEYSIFTGQPLDPRDRKLDKQLEEALVPGYHSPPEKDSSLGSSPASLLVKKKRDTPDTPPIIKALKELDEERVFKSWGTQTEKEDSSSKLVNSRQTEPSVNTGRSPEKCAQQRPKRQTSASQRSSSLPPSSRKANTPTKREIMLTPVTVAYSPKRSPKENLSPGFSHLLSKNESSPVRFDILLDDLDTVPVSTLQQTTAKKQLQFLLDDSEEKKYSEKNSDDPVNPSSCPEHSPNGLKKVSTRQAWEKSKSVSLEQCQPGSAAPQDNGFEYTAKIRTLAETERFFDELTKEKDQIEAALSRMPSPGGRITLQTRLNQEALEDRLEKINRELGSVRMTLKKFHVLRSSANL</sequence>
<feature type="chain" id="PRO_0000355083" description="M-phase phosphoprotein 9">
    <location>
        <begin position="1"/>
        <end position="1114"/>
    </location>
</feature>
<feature type="region of interest" description="Disordered" evidence="3">
    <location>
        <begin position="1"/>
        <end position="55"/>
    </location>
</feature>
<feature type="region of interest" description="Disordered" evidence="3">
    <location>
        <begin position="106"/>
        <end position="161"/>
    </location>
</feature>
<feature type="region of interest" description="Disordered" evidence="3">
    <location>
        <begin position="183"/>
        <end position="207"/>
    </location>
</feature>
<feature type="region of interest" description="Disordered" evidence="3">
    <location>
        <begin position="267"/>
        <end position="301"/>
    </location>
</feature>
<feature type="region of interest" description="Required for its centrosomal localization" evidence="1">
    <location>
        <begin position="368"/>
        <end position="729"/>
    </location>
</feature>
<feature type="region of interest" description="Interaction with CEP97" evidence="1">
    <location>
        <begin position="382"/>
        <end position="431"/>
    </location>
</feature>
<feature type="region of interest" description="Disordered" evidence="3">
    <location>
        <begin position="410"/>
        <end position="468"/>
    </location>
</feature>
<feature type="region of interest" description="Disordered" evidence="3">
    <location>
        <begin position="727"/>
        <end position="755"/>
    </location>
</feature>
<feature type="region of interest" description="Interaction with KIF24" evidence="1">
    <location>
        <begin position="730"/>
        <end position="963"/>
    </location>
</feature>
<feature type="region of interest" description="Disordered" evidence="3">
    <location>
        <begin position="840"/>
        <end position="931"/>
    </location>
</feature>
<feature type="region of interest" description="Disordered" evidence="3">
    <location>
        <begin position="975"/>
        <end position="1002"/>
    </location>
</feature>
<feature type="coiled-coil region" evidence="2">
    <location>
        <begin position="574"/>
        <end position="733"/>
    </location>
</feature>
<feature type="coiled-coil region" evidence="2">
    <location>
        <begin position="1040"/>
        <end position="1105"/>
    </location>
</feature>
<feature type="compositionally biased region" description="Polar residues" evidence="3">
    <location>
        <begin position="24"/>
        <end position="51"/>
    </location>
</feature>
<feature type="compositionally biased region" description="Low complexity" evidence="3">
    <location>
        <begin position="106"/>
        <end position="119"/>
    </location>
</feature>
<feature type="compositionally biased region" description="Polar residues" evidence="3">
    <location>
        <begin position="149"/>
        <end position="161"/>
    </location>
</feature>
<feature type="compositionally biased region" description="Polar residues" evidence="3">
    <location>
        <begin position="267"/>
        <end position="280"/>
    </location>
</feature>
<feature type="compositionally biased region" description="Polar residues" evidence="3">
    <location>
        <begin position="429"/>
        <end position="446"/>
    </location>
</feature>
<feature type="compositionally biased region" description="Polar residues" evidence="3">
    <location>
        <begin position="852"/>
        <end position="868"/>
    </location>
</feature>
<feature type="compositionally biased region" description="Low complexity" evidence="3">
    <location>
        <begin position="881"/>
        <end position="898"/>
    </location>
</feature>
<feature type="compositionally biased region" description="Basic and acidic residues" evidence="3">
    <location>
        <begin position="975"/>
        <end position="985"/>
    </location>
</feature>
<feature type="modified residue" description="Phosphoserine; by TTBK2" evidence="1">
    <location>
        <position position="710"/>
    </location>
</feature>
<feature type="modified residue" description="Phosphoserine; by TTBK2" evidence="1">
    <location>
        <position position="717"/>
    </location>
</feature>
<feature type="modified residue" description="Phosphoserine" evidence="1">
    <location>
        <position position="926"/>
    </location>
</feature>
<feature type="cross-link" description="Glycyl lysine isopeptide (Lys-Gly) (interchain with G-Cter in ubiquitin)" evidence="1">
    <location>
        <position position="713"/>
    </location>
</feature>